<protein>
    <recommendedName>
        <fullName>Alkyldihydroxyacetonephosphate synthase</fullName>
        <shortName>Alkyl-DHAP synthase</shortName>
        <ecNumber>2.5.1.26</ecNumber>
    </recommendedName>
    <alternativeName>
        <fullName>Alkylglycerone-phosphate synthase</fullName>
    </alternativeName>
</protein>
<sequence>MSGEKKEYPKEHIDLYQQIKWNGWGDTRKFLHQLKPSGTIAMTTPEVSSVPLPSLRGFIKKELTLPGEEDKPFVLDETPALQIENIHVDPPKQYPEFVRELKAFFLPDQLKDDKLARITHTFGKSLRDLIRVRIGQVKNAPDLIVLPHSHEEVERLVQLAHKYNVVIIPMGGGSNIVGAIEPVSNERFTVSIDMRRMNKVLWVDRREMTACIQVGIMGPELEKQLHKQGVSLGHDPDSFEFSTLGGWLATCSSGHQSDKYGDIEDMAVSFRTVTPTGTLELRNGARSGAGINYKHIILGSEGTLGIITEAVMKVHAVPQAVEYYGFLFPTFAHAVSALQQIRSSEVIPTMIRVYDPEETQLSFAWKPSKGAVSEFTSAMVKKYLHYIRSFDFKNVCLSIIGFEGPKKVVDFHRTSVFDILSKNAAFGLGSAPGKTWAEKRYDLPYIRDFLLDHNMWVDVAETTVSYANLQTLWKDAKQTFVKHFKDQGIPAWICAHISHTYTNGVCLYFIFASKQNENKDMAQYIEAKKLMTDIIFKYGGSLSHHHGVGYEHVPWMTRYATRGWINVYRSLKETIDPKDICNPRKLIPTIKEENNKEPFLFDVVNVKYPKL</sequence>
<name>ADAS_DICDI</name>
<keyword id="KW-0002">3D-structure</keyword>
<keyword id="KW-0274">FAD</keyword>
<keyword id="KW-0285">Flavoprotein</keyword>
<keyword id="KW-0444">Lipid biosynthesis</keyword>
<keyword id="KW-0443">Lipid metabolism</keyword>
<keyword id="KW-0576">Peroxisome</keyword>
<keyword id="KW-1185">Reference proteome</keyword>
<keyword id="KW-0808">Transferase</keyword>
<reference key="1">
    <citation type="journal article" date="1998" name="Biochem. Biophys. Res. Commun.">
        <title>Nucleotide sequence of alkyl-dihydroxyacetonephosphate synthase cDNA from Dictyostelium discoideum.</title>
        <authorList>
            <person name="de Vet E.C.J.M."/>
            <person name="van den Bosch H."/>
        </authorList>
    </citation>
    <scope>NUCLEOTIDE SEQUENCE [MRNA]</scope>
    <source>
        <strain>KASSX-3</strain>
    </source>
</reference>
<reference key="2">
    <citation type="journal article" date="2005" name="Nature">
        <title>The genome of the social amoeba Dictyostelium discoideum.</title>
        <authorList>
            <person name="Eichinger L."/>
            <person name="Pachebat J.A."/>
            <person name="Gloeckner G."/>
            <person name="Rajandream M.A."/>
            <person name="Sucgang R."/>
            <person name="Berriman M."/>
            <person name="Song J."/>
            <person name="Olsen R."/>
            <person name="Szafranski K."/>
            <person name="Xu Q."/>
            <person name="Tunggal B."/>
            <person name="Kummerfeld S."/>
            <person name="Madera M."/>
            <person name="Konfortov B.A."/>
            <person name="Rivero F."/>
            <person name="Bankier A.T."/>
            <person name="Lehmann R."/>
            <person name="Hamlin N."/>
            <person name="Davies R."/>
            <person name="Gaudet P."/>
            <person name="Fey P."/>
            <person name="Pilcher K."/>
            <person name="Chen G."/>
            <person name="Saunders D."/>
            <person name="Sodergren E.J."/>
            <person name="Davis P."/>
            <person name="Kerhornou A."/>
            <person name="Nie X."/>
            <person name="Hall N."/>
            <person name="Anjard C."/>
            <person name="Hemphill L."/>
            <person name="Bason N."/>
            <person name="Farbrother P."/>
            <person name="Desany B."/>
            <person name="Just E."/>
            <person name="Morio T."/>
            <person name="Rost R."/>
            <person name="Churcher C.M."/>
            <person name="Cooper J."/>
            <person name="Haydock S."/>
            <person name="van Driessche N."/>
            <person name="Cronin A."/>
            <person name="Goodhead I."/>
            <person name="Muzny D.M."/>
            <person name="Mourier T."/>
            <person name="Pain A."/>
            <person name="Lu M."/>
            <person name="Harper D."/>
            <person name="Lindsay R."/>
            <person name="Hauser H."/>
            <person name="James K.D."/>
            <person name="Quiles M."/>
            <person name="Madan Babu M."/>
            <person name="Saito T."/>
            <person name="Buchrieser C."/>
            <person name="Wardroper A."/>
            <person name="Felder M."/>
            <person name="Thangavelu M."/>
            <person name="Johnson D."/>
            <person name="Knights A."/>
            <person name="Loulseged H."/>
            <person name="Mungall K.L."/>
            <person name="Oliver K."/>
            <person name="Price C."/>
            <person name="Quail M.A."/>
            <person name="Urushihara H."/>
            <person name="Hernandez J."/>
            <person name="Rabbinowitsch E."/>
            <person name="Steffen D."/>
            <person name="Sanders M."/>
            <person name="Ma J."/>
            <person name="Kohara Y."/>
            <person name="Sharp S."/>
            <person name="Simmonds M.N."/>
            <person name="Spiegler S."/>
            <person name="Tivey A."/>
            <person name="Sugano S."/>
            <person name="White B."/>
            <person name="Walker D."/>
            <person name="Woodward J.R."/>
            <person name="Winckler T."/>
            <person name="Tanaka Y."/>
            <person name="Shaulsky G."/>
            <person name="Schleicher M."/>
            <person name="Weinstock G.M."/>
            <person name="Rosenthal A."/>
            <person name="Cox E.C."/>
            <person name="Chisholm R.L."/>
            <person name="Gibbs R.A."/>
            <person name="Loomis W.F."/>
            <person name="Platzer M."/>
            <person name="Kay R.R."/>
            <person name="Williams J.G."/>
            <person name="Dear P.H."/>
            <person name="Noegel A.A."/>
            <person name="Barrell B.G."/>
            <person name="Kuspa A."/>
        </authorList>
    </citation>
    <scope>NUCLEOTIDE SEQUENCE [LARGE SCALE GENOMIC DNA]</scope>
    <source>
        <strain>AX4</strain>
    </source>
</reference>
<reference key="3">
    <citation type="journal article" date="2007" name="Structure">
        <title>The crucial step in ether phospholipid biosynthesis: structural basis of a noncanonical reaction associated with a peroxisomal disorder.</title>
        <authorList>
            <person name="Razeto A."/>
            <person name="Mattiroli F."/>
            <person name="Carpanelli E."/>
            <person name="Aliverti A."/>
            <person name="Pandini V."/>
            <person name="Coda A."/>
            <person name="Mattevi A."/>
        </authorList>
    </citation>
    <scope>X-RAY CRYSTALLOGRAPHY (1.95 ANGSTROMS) OF 9-587 IN COMPLEX WITH FAD AND HEXADECAN-1-OL</scope>
    <scope>CATALYTIC ACTIVITY</scope>
    <scope>FUNCTION</scope>
    <scope>SUBUNIT</scope>
    <scope>COFACTOR</scope>
    <scope>ACTIVE SITE</scope>
    <scope>MUTAGENESIS OF ARG-352; ARG-447; TYR-508; HIS-544; HIS-545 AND HIS-546</scope>
</reference>
<comment type="function">
    <text evidence="4">Catalyzes the exchange of an acyl for a long-chain alkyl group and the formation of the ether bond in the biosynthesis of ether phospholipids.</text>
</comment>
<comment type="catalytic activity">
    <reaction evidence="4">
        <text>a long chain fatty alcohol + a 1-acylglycerone 3-phosphate = a 1-O-alkylglycerone 3-phosphate + a long-chain fatty acid + H(+)</text>
        <dbReference type="Rhea" id="RHEA:36171"/>
        <dbReference type="ChEBI" id="CHEBI:15378"/>
        <dbReference type="ChEBI" id="CHEBI:17135"/>
        <dbReference type="ChEBI" id="CHEBI:57534"/>
        <dbReference type="ChEBI" id="CHEBI:57560"/>
        <dbReference type="ChEBI" id="CHEBI:73315"/>
        <dbReference type="EC" id="2.5.1.26"/>
    </reaction>
</comment>
<comment type="cofactor">
    <cofactor evidence="4">
        <name>FAD</name>
        <dbReference type="ChEBI" id="CHEBI:57692"/>
    </cofactor>
</comment>
<comment type="pathway">
    <text>Glycerolipid metabolism; ether lipid biosynthesis.</text>
</comment>
<comment type="subunit">
    <text evidence="4">Homodimer.</text>
</comment>
<comment type="interaction">
    <interactant intactId="EBI-15641715">
        <id>O96759</id>
    </interactant>
    <interactant intactId="EBI-15641715">
        <id>O96759</id>
        <label>eapA</label>
    </interactant>
    <organismsDiffer>false</organismsDiffer>
    <experiments>2</experiments>
</comment>
<comment type="subcellular location">
    <subcellularLocation>
        <location>Peroxisome</location>
    </subcellularLocation>
</comment>
<comment type="similarity">
    <text evidence="5">Belongs to the FAD-binding oxidoreductase/transferase type 4 family.</text>
</comment>
<feature type="chain" id="PRO_0000128178" description="Alkyldihydroxyacetonephosphate synthase">
    <location>
        <begin position="1"/>
        <end position="611"/>
    </location>
</feature>
<feature type="domain" description="FAD-binding PCMH-type" evidence="3">
    <location>
        <begin position="137"/>
        <end position="317"/>
    </location>
</feature>
<feature type="region of interest" description="Important for enzyme activity" evidence="1">
    <location>
        <begin position="544"/>
        <end position="546"/>
    </location>
</feature>
<feature type="short sequence motif" description="Microbody targeting signal" evidence="2">
    <location>
        <begin position="609"/>
        <end position="611"/>
    </location>
</feature>
<feature type="active site" description="Proton donor/acceptor" evidence="4">
    <location>
        <position position="508"/>
    </location>
</feature>
<feature type="binding site" evidence="4">
    <location>
        <begin position="169"/>
        <end position="175"/>
    </location>
    <ligand>
        <name>FAD</name>
        <dbReference type="ChEBI" id="CHEBI:57692"/>
    </ligand>
</feature>
<feature type="binding site" evidence="4">
    <location>
        <begin position="237"/>
        <end position="243"/>
    </location>
    <ligand>
        <name>FAD</name>
        <dbReference type="ChEBI" id="CHEBI:57692"/>
    </ligand>
</feature>
<feature type="binding site" evidence="4">
    <location>
        <begin position="250"/>
        <end position="255"/>
    </location>
    <ligand>
        <name>FAD</name>
        <dbReference type="ChEBI" id="CHEBI:57692"/>
    </ligand>
</feature>
<feature type="binding site" evidence="4">
    <location>
        <begin position="301"/>
        <end position="307"/>
    </location>
    <ligand>
        <name>FAD</name>
        <dbReference type="ChEBI" id="CHEBI:57692"/>
    </ligand>
</feature>
<feature type="binding site">
    <location>
        <position position="447"/>
    </location>
    <ligand>
        <name>substrate</name>
    </ligand>
</feature>
<feature type="site" description="Important for enzyme activity" evidence="1">
    <location>
        <position position="352"/>
    </location>
</feature>
<feature type="mutagenesis site" description="30-fold reduction in activity." evidence="4">
    <original>R</original>
    <variation>H</variation>
    <location>
        <position position="352"/>
    </location>
</feature>
<feature type="mutagenesis site" description="Loss of activity. The FAD binds poorly to the mutant enzyme." evidence="4">
    <original>R</original>
    <variation>L</variation>
    <location>
        <position position="447"/>
    </location>
</feature>
<feature type="mutagenesis site" description="Loss of activity." evidence="4">
    <original>Y</original>
    <variation>F</variation>
    <location>
        <position position="508"/>
    </location>
</feature>
<feature type="mutagenesis site" description="Loss of activity." evidence="4">
    <original>H</original>
    <variation>I</variation>
    <location>
        <position position="544"/>
    </location>
</feature>
<feature type="mutagenesis site" description="Loss of activity." evidence="4">
    <original>H</original>
    <variation>I</variation>
    <location>
        <position position="545"/>
    </location>
</feature>
<feature type="mutagenesis site" description="Loss of activity." evidence="4">
    <original>H</original>
    <variation>I</variation>
    <location>
        <position position="546"/>
    </location>
</feature>
<feature type="helix" evidence="6">
    <location>
        <begin position="15"/>
        <end position="18"/>
    </location>
</feature>
<feature type="strand" evidence="6">
    <location>
        <begin position="21"/>
        <end position="26"/>
    </location>
</feature>
<feature type="strand" evidence="6">
    <location>
        <begin position="30"/>
        <end position="33"/>
    </location>
</feature>
<feature type="turn" evidence="6">
    <location>
        <begin position="35"/>
        <end position="37"/>
    </location>
</feature>
<feature type="strand" evidence="6">
    <location>
        <begin position="40"/>
        <end position="43"/>
    </location>
</feature>
<feature type="strand" evidence="6">
    <location>
        <begin position="45"/>
        <end position="47"/>
    </location>
</feature>
<feature type="helix" evidence="6">
    <location>
        <begin position="55"/>
        <end position="62"/>
    </location>
</feature>
<feature type="helix" evidence="6">
    <location>
        <begin position="83"/>
        <end position="85"/>
    </location>
</feature>
<feature type="helix" evidence="6">
    <location>
        <begin position="95"/>
        <end position="102"/>
    </location>
</feature>
<feature type="helix" evidence="6">
    <location>
        <begin position="107"/>
        <end position="109"/>
    </location>
</feature>
<feature type="helix" evidence="6">
    <location>
        <begin position="114"/>
        <end position="119"/>
    </location>
</feature>
<feature type="helix" evidence="6">
    <location>
        <begin position="126"/>
        <end position="133"/>
    </location>
</feature>
<feature type="strand" evidence="6">
    <location>
        <begin position="142"/>
        <end position="145"/>
    </location>
</feature>
<feature type="helix" evidence="6">
    <location>
        <begin position="150"/>
        <end position="163"/>
    </location>
</feature>
<feature type="strand" evidence="6">
    <location>
        <begin position="166"/>
        <end position="172"/>
    </location>
</feature>
<feature type="strand" evidence="6">
    <location>
        <begin position="189"/>
        <end position="193"/>
    </location>
</feature>
<feature type="helix" evidence="7">
    <location>
        <begin position="194"/>
        <end position="196"/>
    </location>
</feature>
<feature type="strand" evidence="6">
    <location>
        <begin position="200"/>
        <end position="204"/>
    </location>
</feature>
<feature type="turn" evidence="6">
    <location>
        <begin position="205"/>
        <end position="208"/>
    </location>
</feature>
<feature type="strand" evidence="6">
    <location>
        <begin position="209"/>
        <end position="213"/>
    </location>
</feature>
<feature type="helix" evidence="6">
    <location>
        <begin position="218"/>
        <end position="227"/>
    </location>
</feature>
<feature type="helix" evidence="6">
    <location>
        <begin position="239"/>
        <end position="241"/>
    </location>
</feature>
<feature type="helix" evidence="6">
    <location>
        <begin position="244"/>
        <end position="250"/>
    </location>
</feature>
<feature type="helix" evidence="6">
    <location>
        <begin position="257"/>
        <end position="260"/>
    </location>
</feature>
<feature type="helix" evidence="6">
    <location>
        <begin position="263"/>
        <end position="266"/>
    </location>
</feature>
<feature type="strand" evidence="6">
    <location>
        <begin position="267"/>
        <end position="274"/>
    </location>
</feature>
<feature type="strand" evidence="6">
    <location>
        <begin position="277"/>
        <end position="279"/>
    </location>
</feature>
<feature type="helix" evidence="6">
    <location>
        <begin position="294"/>
        <end position="297"/>
    </location>
</feature>
<feature type="strand" evidence="6">
    <location>
        <begin position="306"/>
        <end position="313"/>
    </location>
</feature>
<feature type="strand" evidence="6">
    <location>
        <begin position="319"/>
        <end position="330"/>
    </location>
</feature>
<feature type="helix" evidence="6">
    <location>
        <begin position="331"/>
        <end position="344"/>
    </location>
</feature>
<feature type="strand" evidence="6">
    <location>
        <begin position="349"/>
        <end position="354"/>
    </location>
</feature>
<feature type="helix" evidence="6">
    <location>
        <begin position="356"/>
        <end position="364"/>
    </location>
</feature>
<feature type="helix" evidence="6">
    <location>
        <begin position="376"/>
        <end position="386"/>
    </location>
</feature>
<feature type="turn" evidence="6">
    <location>
        <begin position="387"/>
        <end position="389"/>
    </location>
</feature>
<feature type="turn" evidence="6">
    <location>
        <begin position="392"/>
        <end position="394"/>
    </location>
</feature>
<feature type="strand" evidence="6">
    <location>
        <begin position="396"/>
        <end position="404"/>
    </location>
</feature>
<feature type="helix" evidence="6">
    <location>
        <begin position="406"/>
        <end position="421"/>
    </location>
</feature>
<feature type="turn" evidence="6">
    <location>
        <begin position="422"/>
        <end position="424"/>
    </location>
</feature>
<feature type="strand" evidence="6">
    <location>
        <begin position="426"/>
        <end position="432"/>
    </location>
</feature>
<feature type="helix" evidence="6">
    <location>
        <begin position="435"/>
        <end position="438"/>
    </location>
</feature>
<feature type="helix" evidence="6">
    <location>
        <begin position="439"/>
        <end position="442"/>
    </location>
</feature>
<feature type="helix" evidence="6">
    <location>
        <begin position="443"/>
        <end position="451"/>
    </location>
</feature>
<feature type="turn" evidence="6">
    <location>
        <begin position="452"/>
        <end position="454"/>
    </location>
</feature>
<feature type="strand" evidence="6">
    <location>
        <begin position="455"/>
        <end position="465"/>
    </location>
</feature>
<feature type="helix" evidence="6">
    <location>
        <begin position="466"/>
        <end position="485"/>
    </location>
</feature>
<feature type="turn" evidence="6">
    <location>
        <begin position="486"/>
        <end position="488"/>
    </location>
</feature>
<feature type="strand" evidence="6">
    <location>
        <begin position="491"/>
        <end position="501"/>
    </location>
</feature>
<feature type="strand" evidence="6">
    <location>
        <begin position="504"/>
        <end position="514"/>
    </location>
</feature>
<feature type="helix" evidence="6">
    <location>
        <begin position="522"/>
        <end position="537"/>
    </location>
</feature>
<feature type="helix" evidence="6">
    <location>
        <begin position="564"/>
        <end position="575"/>
    </location>
</feature>
<evidence type="ECO:0000250" key="1"/>
<evidence type="ECO:0000255" key="2"/>
<evidence type="ECO:0000255" key="3">
    <source>
        <dbReference type="PROSITE-ProRule" id="PRU00718"/>
    </source>
</evidence>
<evidence type="ECO:0000269" key="4">
    <source>
    </source>
</evidence>
<evidence type="ECO:0000305" key="5"/>
<evidence type="ECO:0007829" key="6">
    <source>
        <dbReference type="PDB" id="2UUU"/>
    </source>
</evidence>
<evidence type="ECO:0007829" key="7">
    <source>
        <dbReference type="PDB" id="2UUV"/>
    </source>
</evidence>
<accession>O96759</accession>
<accession>Q54LZ5</accession>
<proteinExistence type="evidence at protein level"/>
<gene>
    <name type="primary">eapA</name>
    <name type="ORF">DDB_G0286183</name>
</gene>
<organism>
    <name type="scientific">Dictyostelium discoideum</name>
    <name type="common">Social amoeba</name>
    <dbReference type="NCBI Taxonomy" id="44689"/>
    <lineage>
        <taxon>Eukaryota</taxon>
        <taxon>Amoebozoa</taxon>
        <taxon>Evosea</taxon>
        <taxon>Eumycetozoa</taxon>
        <taxon>Dictyostelia</taxon>
        <taxon>Dictyosteliales</taxon>
        <taxon>Dictyosteliaceae</taxon>
        <taxon>Dictyostelium</taxon>
    </lineage>
</organism>
<dbReference type="EC" id="2.5.1.26"/>
<dbReference type="EMBL" id="AJ010740">
    <property type="protein sequence ID" value="CAA09333.1"/>
    <property type="molecule type" value="mRNA"/>
</dbReference>
<dbReference type="EMBL" id="AAFI02000085">
    <property type="protein sequence ID" value="EAL64267.1"/>
    <property type="molecule type" value="Genomic_DNA"/>
</dbReference>
<dbReference type="PIR" id="JE0365">
    <property type="entry name" value="JE0365"/>
</dbReference>
<dbReference type="PDB" id="2UUU">
    <property type="method" value="X-ray"/>
    <property type="resolution" value="1.95 A"/>
    <property type="chains" value="A/B/C/D=9-587"/>
</dbReference>
<dbReference type="PDB" id="2UUV">
    <property type="method" value="X-ray"/>
    <property type="resolution" value="1.99 A"/>
    <property type="chains" value="A/B/C/D=9-587"/>
</dbReference>
<dbReference type="PDBsum" id="2UUU"/>
<dbReference type="PDBsum" id="2UUV"/>
<dbReference type="SMR" id="O96759"/>
<dbReference type="DIP" id="DIP-29370N"/>
<dbReference type="FunCoup" id="O96759">
    <property type="interactions" value="130"/>
</dbReference>
<dbReference type="STRING" id="44689.O96759"/>
<dbReference type="GlyGen" id="O96759">
    <property type="glycosylation" value="1 site"/>
</dbReference>
<dbReference type="PaxDb" id="44689-DDB0191146"/>
<dbReference type="EnsemblProtists" id="EAL64267">
    <property type="protein sequence ID" value="EAL64267"/>
    <property type="gene ID" value="DDB_G0286183"/>
</dbReference>
<dbReference type="KEGG" id="ddi:DDB_G0286183"/>
<dbReference type="dictyBase" id="DDB_G0286183">
    <property type="gene designation" value="agps"/>
</dbReference>
<dbReference type="VEuPathDB" id="AmoebaDB:DDB_G0286183"/>
<dbReference type="eggNOG" id="KOG1233">
    <property type="taxonomic scope" value="Eukaryota"/>
</dbReference>
<dbReference type="HOGENOM" id="CLU_017779_2_0_1"/>
<dbReference type="InParanoid" id="O96759"/>
<dbReference type="OMA" id="GTISHQH"/>
<dbReference type="PhylomeDB" id="O96759"/>
<dbReference type="BRENDA" id="2.5.1.26">
    <property type="organism ID" value="1939"/>
</dbReference>
<dbReference type="UniPathway" id="UPA00781"/>
<dbReference type="EvolutionaryTrace" id="O96759"/>
<dbReference type="PRO" id="PR:O96759"/>
<dbReference type="Proteomes" id="UP000002195">
    <property type="component" value="Chromosome 4"/>
</dbReference>
<dbReference type="GO" id="GO:0005777">
    <property type="term" value="C:peroxisome"/>
    <property type="evidence" value="ECO:0000250"/>
    <property type="project" value="dictyBase"/>
</dbReference>
<dbReference type="GO" id="GO:0043178">
    <property type="term" value="F:alcohol binding"/>
    <property type="evidence" value="ECO:0000314"/>
    <property type="project" value="dictyBase"/>
</dbReference>
<dbReference type="GO" id="GO:0008609">
    <property type="term" value="F:alkylglycerone-phosphate synthase activity"/>
    <property type="evidence" value="ECO:0000314"/>
    <property type="project" value="dictyBase"/>
</dbReference>
<dbReference type="GO" id="GO:0071949">
    <property type="term" value="F:FAD binding"/>
    <property type="evidence" value="ECO:0000250"/>
    <property type="project" value="UniProtKB"/>
</dbReference>
<dbReference type="GO" id="GO:0050660">
    <property type="term" value="F:flavin adenine dinucleotide binding"/>
    <property type="evidence" value="ECO:0000314"/>
    <property type="project" value="dictyBase"/>
</dbReference>
<dbReference type="GO" id="GO:0042802">
    <property type="term" value="F:identical protein binding"/>
    <property type="evidence" value="ECO:0000353"/>
    <property type="project" value="IntAct"/>
</dbReference>
<dbReference type="GO" id="GO:0008611">
    <property type="term" value="P:ether lipid biosynthetic process"/>
    <property type="evidence" value="ECO:0000314"/>
    <property type="project" value="dictyBase"/>
</dbReference>
<dbReference type="DisProt" id="DP02688"/>
<dbReference type="Gene3D" id="3.40.462.40">
    <property type="entry name" value="FAD-linked oxidase, cap domain/gating helix"/>
    <property type="match status" value="1"/>
</dbReference>
<dbReference type="Gene3D" id="3.30.43.10">
    <property type="entry name" value="Uridine Diphospho-n-acetylenolpyruvylglucosamine Reductase, domain 2"/>
    <property type="match status" value="1"/>
</dbReference>
<dbReference type="Gene3D" id="1.10.45.10">
    <property type="entry name" value="Vanillyl-alcohol Oxidase, Chain A, domain 4"/>
    <property type="match status" value="1"/>
</dbReference>
<dbReference type="InterPro" id="IPR025650">
    <property type="entry name" value="Alkyl-DHAP_Synthase"/>
</dbReference>
<dbReference type="InterPro" id="IPR004113">
    <property type="entry name" value="FAD-bd_oxidored_4_C"/>
</dbReference>
<dbReference type="InterPro" id="IPR016166">
    <property type="entry name" value="FAD-bd_PCMH"/>
</dbReference>
<dbReference type="InterPro" id="IPR036318">
    <property type="entry name" value="FAD-bd_PCMH-like_sf"/>
</dbReference>
<dbReference type="InterPro" id="IPR016167">
    <property type="entry name" value="FAD-bd_PCMH_sub1"/>
</dbReference>
<dbReference type="InterPro" id="IPR016164">
    <property type="entry name" value="FAD-linked_Oxase-like_C"/>
</dbReference>
<dbReference type="InterPro" id="IPR006094">
    <property type="entry name" value="Oxid_FAD_bind_N"/>
</dbReference>
<dbReference type="InterPro" id="IPR016171">
    <property type="entry name" value="Vanillyl_alc_oxidase_C-sub2"/>
</dbReference>
<dbReference type="PANTHER" id="PTHR46568">
    <property type="entry name" value="ALKYLDIHYDROXYACETONEPHOSPHATE SYNTHASE, PEROXISOMAL"/>
    <property type="match status" value="1"/>
</dbReference>
<dbReference type="PANTHER" id="PTHR46568:SF1">
    <property type="entry name" value="ALKYLDIHYDROXYACETONEPHOSPHATE SYNTHASE, PEROXISOMAL"/>
    <property type="match status" value="1"/>
</dbReference>
<dbReference type="Pfam" id="PF02913">
    <property type="entry name" value="FAD-oxidase_C"/>
    <property type="match status" value="1"/>
</dbReference>
<dbReference type="Pfam" id="PF01565">
    <property type="entry name" value="FAD_binding_4"/>
    <property type="match status" value="1"/>
</dbReference>
<dbReference type="SUPFAM" id="SSF56176">
    <property type="entry name" value="FAD-binding/transporter-associated domain-like"/>
    <property type="match status" value="1"/>
</dbReference>
<dbReference type="SUPFAM" id="SSF55103">
    <property type="entry name" value="FAD-linked oxidases, C-terminal domain"/>
    <property type="match status" value="1"/>
</dbReference>
<dbReference type="PROSITE" id="PS51387">
    <property type="entry name" value="FAD_PCMH"/>
    <property type="match status" value="1"/>
</dbReference>